<sequence>MAPGLDLTPDFHPPTTTTTTTNNAPPQQRTLLLAPPTLATHGEARLATLFTTTYPRATTDLQMLDRLAAGLVTLPATTYDLVLVLTDPDGSRRAEAAALLADRAVWARLVPAVRAGGRVASEEGGGEGTEFLGDQRVGREAVLAGLVAGGVGGFVKPEYAEEEAVPLRFGKKKAAAAAAAAVSSAGPAVGTVKVATATSAGKKEEVGMVPPAVAAAAAAPAGVGFVDFSDDLDLDVEDDEDVIDEETLLTEEDLWRPIQQPPECQPQPGKKRRACKDCTCGLASRMEAEDKARRAKADSDLNTLKLKSEDLNELDFTVQGKTGSCGSCYLGDAFRCSDCPYIGLPAFKPGEEVKIVNNAIQL</sequence>
<proteinExistence type="inferred from homology"/>
<reference key="1">
    <citation type="journal article" date="2015" name="Genome Announc.">
        <title>Draft genome sequence of the cellulolytic fungus Chaetomium globosum.</title>
        <authorList>
            <person name="Cuomo C.A."/>
            <person name="Untereiner W.A."/>
            <person name="Ma L.-J."/>
            <person name="Grabherr M."/>
            <person name="Birren B.W."/>
        </authorList>
    </citation>
    <scope>NUCLEOTIDE SEQUENCE [LARGE SCALE GENOMIC DNA]</scope>
    <source>
        <strain>ATCC 6205 / CBS 148.51 / DSM 1962 / NBRC 6347 / NRRL 1970</strain>
    </source>
</reference>
<protein>
    <recommendedName>
        <fullName evidence="1">Fe-S cluster assembly protein DRE2</fullName>
    </recommendedName>
    <alternativeName>
        <fullName evidence="1">Anamorsin homolog</fullName>
    </alternativeName>
</protein>
<feature type="chain" id="PRO_0000324861" description="Fe-S cluster assembly protein DRE2">
    <location>
        <begin position="1"/>
        <end position="362"/>
    </location>
</feature>
<feature type="region of interest" description="Disordered" evidence="2">
    <location>
        <begin position="1"/>
        <end position="28"/>
    </location>
</feature>
<feature type="region of interest" description="N-terminal SAM-like domain" evidence="1">
    <location>
        <begin position="24"/>
        <end position="165"/>
    </location>
</feature>
<feature type="region of interest" description="Linker" evidence="1">
    <location>
        <begin position="166"/>
        <end position="254"/>
    </location>
</feature>
<feature type="region of interest" description="Fe-S binding site A" evidence="1">
    <location>
        <begin position="264"/>
        <end position="280"/>
    </location>
</feature>
<feature type="region of interest" description="Fe-S binding site B" evidence="1">
    <location>
        <begin position="325"/>
        <end position="339"/>
    </location>
</feature>
<feature type="short sequence motif" description="Cx2C motif 1" evidence="1">
    <location>
        <begin position="325"/>
        <end position="328"/>
    </location>
</feature>
<feature type="short sequence motif" description="Cx2C motif 2" evidence="1">
    <location>
        <begin position="336"/>
        <end position="339"/>
    </location>
</feature>
<feature type="compositionally biased region" description="Low complexity" evidence="2">
    <location>
        <begin position="15"/>
        <end position="28"/>
    </location>
</feature>
<feature type="binding site" evidence="1">
    <location>
        <position position="264"/>
    </location>
    <ligand>
        <name>[2Fe-2S] cluster</name>
        <dbReference type="ChEBI" id="CHEBI:190135"/>
    </ligand>
</feature>
<feature type="binding site" evidence="1">
    <location>
        <position position="275"/>
    </location>
    <ligand>
        <name>[2Fe-2S] cluster</name>
        <dbReference type="ChEBI" id="CHEBI:190135"/>
    </ligand>
</feature>
<feature type="binding site" evidence="1">
    <location>
        <position position="278"/>
    </location>
    <ligand>
        <name>[2Fe-2S] cluster</name>
        <dbReference type="ChEBI" id="CHEBI:190135"/>
    </ligand>
</feature>
<feature type="binding site" evidence="1">
    <location>
        <position position="280"/>
    </location>
    <ligand>
        <name>[2Fe-2S] cluster</name>
        <dbReference type="ChEBI" id="CHEBI:190135"/>
    </ligand>
</feature>
<feature type="binding site" evidence="1">
    <location>
        <position position="325"/>
    </location>
    <ligand>
        <name>[4Fe-4S] cluster</name>
        <dbReference type="ChEBI" id="CHEBI:49883"/>
    </ligand>
</feature>
<feature type="binding site" evidence="1">
    <location>
        <position position="328"/>
    </location>
    <ligand>
        <name>[4Fe-4S] cluster</name>
        <dbReference type="ChEBI" id="CHEBI:49883"/>
    </ligand>
</feature>
<feature type="binding site" evidence="1">
    <location>
        <position position="336"/>
    </location>
    <ligand>
        <name>[4Fe-4S] cluster</name>
        <dbReference type="ChEBI" id="CHEBI:49883"/>
    </ligand>
</feature>
<feature type="binding site" evidence="1">
    <location>
        <position position="339"/>
    </location>
    <ligand>
        <name>[4Fe-4S] cluster</name>
        <dbReference type="ChEBI" id="CHEBI:49883"/>
    </ligand>
</feature>
<evidence type="ECO:0000255" key="1">
    <source>
        <dbReference type="HAMAP-Rule" id="MF_03115"/>
    </source>
</evidence>
<evidence type="ECO:0000256" key="2">
    <source>
        <dbReference type="SAM" id="MobiDB-lite"/>
    </source>
</evidence>
<organism>
    <name type="scientific">Chaetomium globosum (strain ATCC 6205 / CBS 148.51 / DSM 1962 / NBRC 6347 / NRRL 1970)</name>
    <name type="common">Soil fungus</name>
    <dbReference type="NCBI Taxonomy" id="306901"/>
    <lineage>
        <taxon>Eukaryota</taxon>
        <taxon>Fungi</taxon>
        <taxon>Dikarya</taxon>
        <taxon>Ascomycota</taxon>
        <taxon>Pezizomycotina</taxon>
        <taxon>Sordariomycetes</taxon>
        <taxon>Sordariomycetidae</taxon>
        <taxon>Sordariales</taxon>
        <taxon>Chaetomiaceae</taxon>
        <taxon>Chaetomium</taxon>
    </lineage>
</organism>
<comment type="function">
    <text evidence="1">Component of the cytosolic iron-sulfur (Fe-S) protein assembly (CIA) machinery required for the maturation of extramitochondrial Fe-S proteins. Part of an electron transfer chain functioning in an early step of cytosolic Fe-S biogenesis, facilitating the de novo assembly of a [4Fe-4S] cluster on the scaffold complex CFD1-NBP35. Electrons are transferred to DRE2 from NADPH via the FAD- and FMN-containing protein TAH18. TAH18-DRE2 are also required for the assembly of the diferric tyrosyl radical cofactor of ribonucleotide reductase (RNR), probably by providing electrons for reduction during radical cofactor maturation in the catalytic small subunit RNR2.</text>
</comment>
<comment type="cofactor">
    <cofactor evidence="1">
        <name>[2Fe-2S] cluster</name>
        <dbReference type="ChEBI" id="CHEBI:190135"/>
    </cofactor>
</comment>
<comment type="cofactor">
    <cofactor evidence="1">
        <name>[4Fe-4S] cluster</name>
        <dbReference type="ChEBI" id="CHEBI:49883"/>
    </cofactor>
</comment>
<comment type="subunit">
    <text evidence="1">Monomer. Interacts with TAH18. Interacts with MIA40.</text>
</comment>
<comment type="subcellular location">
    <subcellularLocation>
        <location evidence="1">Cytoplasm</location>
    </subcellularLocation>
    <subcellularLocation>
        <location evidence="1">Mitochondrion intermembrane space</location>
    </subcellularLocation>
</comment>
<comment type="domain">
    <text evidence="1">The C-terminal domain binds 2 Fe-S clusters but is otherwise mostly in an intrinsically disordered conformation.</text>
</comment>
<comment type="domain">
    <text evidence="1">The N-terminal domain has structural similarity with S-adenosyl-L-methionine-dependent methyltransferases, but does not bind S-adenosyl-L-methionine. It is required for correct assembly of the 2 Fe-S clusters.</text>
</comment>
<comment type="domain">
    <text evidence="1">The twin Cx2C motifs are involved in the recognition by the mitochondrial MIA40-ERV1 disulfide relay system. The formation of 2 disulfide bonds in the Cx2C motifs through dithiol/disulfide exchange reactions effectively traps the protein in the mitochondrial intermembrane space.</text>
</comment>
<comment type="similarity">
    <text evidence="1">Belongs to the anamorsin family.</text>
</comment>
<gene>
    <name evidence="1" type="primary">DRE2</name>
    <name type="ORF">CHGG_07038</name>
</gene>
<dbReference type="EMBL" id="CH408033">
    <property type="protein sequence ID" value="EAQ85785.1"/>
    <property type="molecule type" value="Genomic_DNA"/>
</dbReference>
<dbReference type="RefSeq" id="XP_001224694.1">
    <property type="nucleotide sequence ID" value="XM_001224693.1"/>
</dbReference>
<dbReference type="STRING" id="306901.Q2GYB6"/>
<dbReference type="GeneID" id="4393179"/>
<dbReference type="VEuPathDB" id="FungiDB:CHGG_07038"/>
<dbReference type="eggNOG" id="KOG4020">
    <property type="taxonomic scope" value="Eukaryota"/>
</dbReference>
<dbReference type="HOGENOM" id="CLU_067152_1_0_1"/>
<dbReference type="InParanoid" id="Q2GYB6"/>
<dbReference type="OMA" id="DFVMPVT"/>
<dbReference type="OrthoDB" id="311633at2759"/>
<dbReference type="Proteomes" id="UP000001056">
    <property type="component" value="Unassembled WGS sequence"/>
</dbReference>
<dbReference type="GO" id="GO:0005758">
    <property type="term" value="C:mitochondrial intermembrane space"/>
    <property type="evidence" value="ECO:0007669"/>
    <property type="project" value="UniProtKB-SubCell"/>
</dbReference>
<dbReference type="GO" id="GO:0051537">
    <property type="term" value="F:2 iron, 2 sulfur cluster binding"/>
    <property type="evidence" value="ECO:0007669"/>
    <property type="project" value="UniProtKB-UniRule"/>
</dbReference>
<dbReference type="GO" id="GO:0051539">
    <property type="term" value="F:4 iron, 4 sulfur cluster binding"/>
    <property type="evidence" value="ECO:0007669"/>
    <property type="project" value="UniProtKB-KW"/>
</dbReference>
<dbReference type="GO" id="GO:0009055">
    <property type="term" value="F:electron transfer activity"/>
    <property type="evidence" value="ECO:0007669"/>
    <property type="project" value="UniProtKB-UniRule"/>
</dbReference>
<dbReference type="GO" id="GO:0046872">
    <property type="term" value="F:metal ion binding"/>
    <property type="evidence" value="ECO:0007669"/>
    <property type="project" value="UniProtKB-KW"/>
</dbReference>
<dbReference type="GO" id="GO:0016226">
    <property type="term" value="P:iron-sulfur cluster assembly"/>
    <property type="evidence" value="ECO:0007669"/>
    <property type="project" value="UniProtKB-UniRule"/>
</dbReference>
<dbReference type="HAMAP" id="MF_03115">
    <property type="entry name" value="Anamorsin"/>
    <property type="match status" value="1"/>
</dbReference>
<dbReference type="InterPro" id="IPR007785">
    <property type="entry name" value="Anamorsin"/>
</dbReference>
<dbReference type="InterPro" id="IPR046408">
    <property type="entry name" value="CIAPIN1"/>
</dbReference>
<dbReference type="InterPro" id="IPR031838">
    <property type="entry name" value="Dre2_N"/>
</dbReference>
<dbReference type="PANTHER" id="PTHR13273">
    <property type="entry name" value="ANAMORSIN"/>
    <property type="match status" value="1"/>
</dbReference>
<dbReference type="PANTHER" id="PTHR13273:SF14">
    <property type="entry name" value="ANAMORSIN"/>
    <property type="match status" value="1"/>
</dbReference>
<dbReference type="Pfam" id="PF05093">
    <property type="entry name" value="CIAPIN1"/>
    <property type="match status" value="1"/>
</dbReference>
<dbReference type="Pfam" id="PF16803">
    <property type="entry name" value="DRE2_N"/>
    <property type="match status" value="1"/>
</dbReference>
<keyword id="KW-0001">2Fe-2S</keyword>
<keyword id="KW-0004">4Fe-4S</keyword>
<keyword id="KW-0963">Cytoplasm</keyword>
<keyword id="KW-0408">Iron</keyword>
<keyword id="KW-0411">Iron-sulfur</keyword>
<keyword id="KW-0479">Metal-binding</keyword>
<keyword id="KW-0496">Mitochondrion</keyword>
<keyword id="KW-1185">Reference proteome</keyword>
<name>DRE2_CHAGB</name>
<accession>Q2GYB6</accession>